<evidence type="ECO:0000255" key="1">
    <source>
        <dbReference type="HAMAP-Rule" id="MF_01007"/>
    </source>
</evidence>
<evidence type="ECO:0000305" key="2"/>
<gene>
    <name evidence="1" type="primary">rsmH</name>
    <name type="synonym">mraW</name>
    <name type="ordered locus">MMAR_3202</name>
</gene>
<dbReference type="EC" id="2.1.1.199" evidence="1"/>
<dbReference type="EMBL" id="CP000854">
    <property type="protein sequence ID" value="ACC41628.1"/>
    <property type="status" value="ALT_INIT"/>
    <property type="molecule type" value="Genomic_DNA"/>
</dbReference>
<dbReference type="RefSeq" id="WP_085979825.1">
    <property type="nucleotide sequence ID" value="NC_010612.1"/>
</dbReference>
<dbReference type="SMR" id="B2HGS5"/>
<dbReference type="STRING" id="216594.MMAR_3202"/>
<dbReference type="KEGG" id="mmi:MMAR_3202"/>
<dbReference type="eggNOG" id="COG0275">
    <property type="taxonomic scope" value="Bacteria"/>
</dbReference>
<dbReference type="HOGENOM" id="CLU_038422_0_0_11"/>
<dbReference type="OrthoDB" id="9806637at2"/>
<dbReference type="Proteomes" id="UP000001190">
    <property type="component" value="Chromosome"/>
</dbReference>
<dbReference type="GO" id="GO:0005737">
    <property type="term" value="C:cytoplasm"/>
    <property type="evidence" value="ECO:0007669"/>
    <property type="project" value="UniProtKB-SubCell"/>
</dbReference>
<dbReference type="GO" id="GO:0071424">
    <property type="term" value="F:rRNA (cytosine-N4-)-methyltransferase activity"/>
    <property type="evidence" value="ECO:0007669"/>
    <property type="project" value="UniProtKB-UniRule"/>
</dbReference>
<dbReference type="GO" id="GO:0070475">
    <property type="term" value="P:rRNA base methylation"/>
    <property type="evidence" value="ECO:0007669"/>
    <property type="project" value="UniProtKB-UniRule"/>
</dbReference>
<dbReference type="FunFam" id="1.10.150.170:FF:000001">
    <property type="entry name" value="Ribosomal RNA small subunit methyltransferase H"/>
    <property type="match status" value="1"/>
</dbReference>
<dbReference type="Gene3D" id="1.10.150.170">
    <property type="entry name" value="Putative methyltransferase TM0872, insert domain"/>
    <property type="match status" value="1"/>
</dbReference>
<dbReference type="Gene3D" id="3.40.50.150">
    <property type="entry name" value="Vaccinia Virus protein VP39"/>
    <property type="match status" value="1"/>
</dbReference>
<dbReference type="HAMAP" id="MF_01007">
    <property type="entry name" value="16SrRNA_methyltr_H"/>
    <property type="match status" value="1"/>
</dbReference>
<dbReference type="InterPro" id="IPR002903">
    <property type="entry name" value="RsmH"/>
</dbReference>
<dbReference type="InterPro" id="IPR023397">
    <property type="entry name" value="SAM-dep_MeTrfase_MraW_recog"/>
</dbReference>
<dbReference type="InterPro" id="IPR029063">
    <property type="entry name" value="SAM-dependent_MTases_sf"/>
</dbReference>
<dbReference type="NCBIfam" id="TIGR00006">
    <property type="entry name" value="16S rRNA (cytosine(1402)-N(4))-methyltransferase RsmH"/>
    <property type="match status" value="1"/>
</dbReference>
<dbReference type="PANTHER" id="PTHR11265:SF0">
    <property type="entry name" value="12S RRNA N4-METHYLCYTIDINE METHYLTRANSFERASE"/>
    <property type="match status" value="1"/>
</dbReference>
<dbReference type="PANTHER" id="PTHR11265">
    <property type="entry name" value="S-ADENOSYL-METHYLTRANSFERASE MRAW"/>
    <property type="match status" value="1"/>
</dbReference>
<dbReference type="Pfam" id="PF01795">
    <property type="entry name" value="Methyltransf_5"/>
    <property type="match status" value="1"/>
</dbReference>
<dbReference type="SUPFAM" id="SSF81799">
    <property type="entry name" value="Putative methyltransferase TM0872, insert domain"/>
    <property type="match status" value="1"/>
</dbReference>
<dbReference type="SUPFAM" id="SSF53335">
    <property type="entry name" value="S-adenosyl-L-methionine-dependent methyltransferases"/>
    <property type="match status" value="1"/>
</dbReference>
<name>RSMH_MYCMM</name>
<reference key="1">
    <citation type="journal article" date="2008" name="Genome Res.">
        <title>Insights from the complete genome sequence of Mycobacterium marinum on the evolution of Mycobacterium tuberculosis.</title>
        <authorList>
            <person name="Stinear T.P."/>
            <person name="Seemann T."/>
            <person name="Harrison P.F."/>
            <person name="Jenkin G.A."/>
            <person name="Davies J.K."/>
            <person name="Johnson P.D."/>
            <person name="Abdellah Z."/>
            <person name="Arrowsmith C."/>
            <person name="Chillingworth T."/>
            <person name="Churcher C."/>
            <person name="Clarke K."/>
            <person name="Cronin A."/>
            <person name="Davis P."/>
            <person name="Goodhead I."/>
            <person name="Holroyd N."/>
            <person name="Jagels K."/>
            <person name="Lord A."/>
            <person name="Moule S."/>
            <person name="Mungall K."/>
            <person name="Norbertczak H."/>
            <person name="Quail M.A."/>
            <person name="Rabbinowitsch E."/>
            <person name="Walker D."/>
            <person name="White B."/>
            <person name="Whitehead S."/>
            <person name="Small P.L."/>
            <person name="Brosch R."/>
            <person name="Ramakrishnan L."/>
            <person name="Fischbach M.A."/>
            <person name="Parkhill J."/>
            <person name="Cole S.T."/>
        </authorList>
    </citation>
    <scope>NUCLEOTIDE SEQUENCE [LARGE SCALE GENOMIC DNA]</scope>
    <source>
        <strain>ATCC BAA-535 / M</strain>
    </source>
</reference>
<feature type="chain" id="PRO_0000386990" description="Ribosomal RNA small subunit methyltransferase H">
    <location>
        <begin position="1"/>
        <end position="395"/>
    </location>
</feature>
<feature type="binding site" evidence="1">
    <location>
        <begin position="101"/>
        <end position="103"/>
    </location>
    <ligand>
        <name>S-adenosyl-L-methionine</name>
        <dbReference type="ChEBI" id="CHEBI:59789"/>
    </ligand>
</feature>
<feature type="binding site" evidence="1">
    <location>
        <position position="120"/>
    </location>
    <ligand>
        <name>S-adenosyl-L-methionine</name>
        <dbReference type="ChEBI" id="CHEBI:59789"/>
    </ligand>
</feature>
<feature type="binding site" evidence="1">
    <location>
        <position position="147"/>
    </location>
    <ligand>
        <name>S-adenosyl-L-methionine</name>
        <dbReference type="ChEBI" id="CHEBI:59789"/>
    </ligand>
</feature>
<feature type="binding site" evidence="1">
    <location>
        <position position="171"/>
    </location>
    <ligand>
        <name>S-adenosyl-L-methionine</name>
        <dbReference type="ChEBI" id="CHEBI:59789"/>
    </ligand>
</feature>
<feature type="binding site" evidence="1">
    <location>
        <position position="178"/>
    </location>
    <ligand>
        <name>S-adenosyl-L-methionine</name>
        <dbReference type="ChEBI" id="CHEBI:59789"/>
    </ligand>
</feature>
<protein>
    <recommendedName>
        <fullName evidence="1">Ribosomal RNA small subunit methyltransferase H</fullName>
        <ecNumber evidence="1">2.1.1.199</ecNumber>
    </recommendedName>
    <alternativeName>
        <fullName evidence="1">16S rRNA m(4)C1402 methyltransferase</fullName>
    </alternativeName>
    <alternativeName>
        <fullName evidence="1">rRNA (cytosine-N(4)-)-methyltransferase RsmH</fullName>
    </alternativeName>
</protein>
<accession>B2HGS5</accession>
<sequence length="395" mass="42772">MHVRAPWSLPEPTLAYFPNARFVPSDRDLGAGALRLVGEDCPAPTRGGVAVADGPTEPGFNDFHHVPVLAQRCVELLRPALTRHHADGSEAVLVDATIGAGGHAERFLTELPGLRLIGLDRDPSALEIVRTRLARFADRVTLVHTRYDGLASALTELGYGAAQSIDGALFDLGVSSMQLDQAERGFAYSKDAPLDMRMNPQSALSAADIINTYDEAALADILHRYGEERFARRIAARIIRRRADKPFTTTAELVALLYEAIPAAARRTGGHPAKRTFQALRIAVNDELGSLRSAIPAAMDALAVGGRIVVMAYQSLEDRIVKRVFADAVASRTPMDLPVELPGHGPRFRSLTHGAERADAAEVERNPRSAPVRLRALERLELEALPRQGTGKGES</sequence>
<proteinExistence type="inferred from homology"/>
<comment type="function">
    <text evidence="1">Specifically methylates the N4 position of cytidine in position 1402 (C1402) of 16S rRNA.</text>
</comment>
<comment type="catalytic activity">
    <reaction evidence="1">
        <text>cytidine(1402) in 16S rRNA + S-adenosyl-L-methionine = N(4)-methylcytidine(1402) in 16S rRNA + S-adenosyl-L-homocysteine + H(+)</text>
        <dbReference type="Rhea" id="RHEA:42928"/>
        <dbReference type="Rhea" id="RHEA-COMP:10286"/>
        <dbReference type="Rhea" id="RHEA-COMP:10287"/>
        <dbReference type="ChEBI" id="CHEBI:15378"/>
        <dbReference type="ChEBI" id="CHEBI:57856"/>
        <dbReference type="ChEBI" id="CHEBI:59789"/>
        <dbReference type="ChEBI" id="CHEBI:74506"/>
        <dbReference type="ChEBI" id="CHEBI:82748"/>
        <dbReference type="EC" id="2.1.1.199"/>
    </reaction>
</comment>
<comment type="subcellular location">
    <subcellularLocation>
        <location evidence="1">Cytoplasm</location>
    </subcellularLocation>
</comment>
<comment type="similarity">
    <text evidence="1">Belongs to the methyltransferase superfamily. RsmH family.</text>
</comment>
<comment type="sequence caution" evidence="2">
    <conflict type="erroneous initiation">
        <sequence resource="EMBL-CDS" id="ACC41628"/>
    </conflict>
    <text>Truncated N-terminus.</text>
</comment>
<keyword id="KW-0963">Cytoplasm</keyword>
<keyword id="KW-0489">Methyltransferase</keyword>
<keyword id="KW-1185">Reference proteome</keyword>
<keyword id="KW-0698">rRNA processing</keyword>
<keyword id="KW-0949">S-adenosyl-L-methionine</keyword>
<keyword id="KW-0808">Transferase</keyword>
<organism>
    <name type="scientific">Mycobacterium marinum (strain ATCC BAA-535 / M)</name>
    <dbReference type="NCBI Taxonomy" id="216594"/>
    <lineage>
        <taxon>Bacteria</taxon>
        <taxon>Bacillati</taxon>
        <taxon>Actinomycetota</taxon>
        <taxon>Actinomycetes</taxon>
        <taxon>Mycobacteriales</taxon>
        <taxon>Mycobacteriaceae</taxon>
        <taxon>Mycobacterium</taxon>
        <taxon>Mycobacterium ulcerans group</taxon>
    </lineage>
</organism>